<dbReference type="EMBL" id="AL354794">
    <property type="status" value="NOT_ANNOTATED_CDS"/>
    <property type="molecule type" value="Genomic_DNA"/>
</dbReference>
<dbReference type="EMBL" id="BC013062">
    <property type="protein sequence ID" value="AAH13062.1"/>
    <property type="molecule type" value="mRNA"/>
</dbReference>
<dbReference type="CCDS" id="CCDS6623.3"/>
<dbReference type="RefSeq" id="NP_612206.4">
    <property type="nucleotide sequence ID" value="NM_138333.4"/>
</dbReference>
<dbReference type="PDB" id="8SO0">
    <property type="method" value="EM"/>
    <property type="resolution" value="2.80 A"/>
    <property type="chains" value="D=29-120"/>
</dbReference>
<dbReference type="PDB" id="8TWE">
    <property type="method" value="EM"/>
    <property type="resolution" value="2.55 A"/>
    <property type="chains" value="D=29-120"/>
</dbReference>
<dbReference type="PDB" id="8TWI">
    <property type="method" value="EM"/>
    <property type="resolution" value="2.69 A"/>
    <property type="chains" value="D=29-120"/>
</dbReference>
<dbReference type="PDBsum" id="8SO0"/>
<dbReference type="PDBsum" id="8TWE"/>
<dbReference type="PDBsum" id="8TWI"/>
<dbReference type="EMDB" id="EMD-40644"/>
<dbReference type="EMDB" id="EMD-41667"/>
<dbReference type="EMDB" id="EMD-41668"/>
<dbReference type="SMR" id="Q96E09"/>
<dbReference type="BioGRID" id="125489">
    <property type="interactions" value="35"/>
</dbReference>
<dbReference type="FunCoup" id="Q96E09">
    <property type="interactions" value="3872"/>
</dbReference>
<dbReference type="IntAct" id="Q96E09">
    <property type="interactions" value="31"/>
</dbReference>
<dbReference type="MINT" id="Q96E09"/>
<dbReference type="STRING" id="9606.ENSP00000377807"/>
<dbReference type="GlyGen" id="Q96E09">
    <property type="glycosylation" value="2 sites, 1 O-linked glycan (1 site)"/>
</dbReference>
<dbReference type="iPTMnet" id="Q96E09"/>
<dbReference type="PhosphoSitePlus" id="Q96E09"/>
<dbReference type="BioMuta" id="FAM122A"/>
<dbReference type="DMDM" id="68565254"/>
<dbReference type="jPOST" id="Q96E09"/>
<dbReference type="MassIVE" id="Q96E09"/>
<dbReference type="PaxDb" id="9606-ENSP00000377807"/>
<dbReference type="PeptideAtlas" id="Q96E09"/>
<dbReference type="ProteomicsDB" id="76353"/>
<dbReference type="Pumba" id="Q96E09"/>
<dbReference type="Antibodypedia" id="26789">
    <property type="antibodies" value="50 antibodies from 13 providers"/>
</dbReference>
<dbReference type="DNASU" id="116224"/>
<dbReference type="Ensembl" id="ENST00000394264.7">
    <property type="protein sequence ID" value="ENSP00000377807.5"/>
    <property type="gene ID" value="ENSG00000187866.10"/>
</dbReference>
<dbReference type="GeneID" id="116224"/>
<dbReference type="KEGG" id="hsa:116224"/>
<dbReference type="MANE-Select" id="ENST00000394264.7">
    <property type="protein sequence ID" value="ENSP00000377807.5"/>
    <property type="RefSeq nucleotide sequence ID" value="NM_138333.5"/>
    <property type="RefSeq protein sequence ID" value="NP_612206.5"/>
</dbReference>
<dbReference type="UCSC" id="uc004agw.2">
    <property type="organism name" value="human"/>
</dbReference>
<dbReference type="AGR" id="HGNC:23490"/>
<dbReference type="CTD" id="116224"/>
<dbReference type="DisGeNET" id="116224"/>
<dbReference type="GeneCards" id="PABIR1"/>
<dbReference type="HGNC" id="HGNC:23490">
    <property type="gene designation" value="PABIR1"/>
</dbReference>
<dbReference type="HPA" id="ENSG00000187866">
    <property type="expression patterns" value="Low tissue specificity"/>
</dbReference>
<dbReference type="neXtProt" id="NX_Q96E09"/>
<dbReference type="OpenTargets" id="ENSG00000187866"/>
<dbReference type="VEuPathDB" id="HostDB:ENSG00000187866"/>
<dbReference type="eggNOG" id="ENOG502QTCH">
    <property type="taxonomic scope" value="Eukaryota"/>
</dbReference>
<dbReference type="GeneTree" id="ENSGT00390000015476"/>
<dbReference type="HOGENOM" id="CLU_083344_0_0_1"/>
<dbReference type="InParanoid" id="Q96E09"/>
<dbReference type="OMA" id="ISHHTDS"/>
<dbReference type="OrthoDB" id="10036177at2759"/>
<dbReference type="PAN-GO" id="Q96E09">
    <property type="GO annotations" value="4 GO annotations based on evolutionary models"/>
</dbReference>
<dbReference type="PhylomeDB" id="Q96E09"/>
<dbReference type="TreeFam" id="TF330808"/>
<dbReference type="PathwayCommons" id="Q96E09"/>
<dbReference type="SignaLink" id="Q96E09"/>
<dbReference type="SIGNOR" id="Q96E09"/>
<dbReference type="BioGRID-ORCS" id="116224">
    <property type="hits" value="180 hits in 1170 CRISPR screens"/>
</dbReference>
<dbReference type="GenomeRNAi" id="116224"/>
<dbReference type="Pharos" id="Q96E09">
    <property type="development level" value="Tbio"/>
</dbReference>
<dbReference type="PRO" id="PR:Q96E09"/>
<dbReference type="Proteomes" id="UP000005640">
    <property type="component" value="Chromosome 9"/>
</dbReference>
<dbReference type="RNAct" id="Q96E09">
    <property type="molecule type" value="protein"/>
</dbReference>
<dbReference type="Bgee" id="ENSG00000187866">
    <property type="expression patterns" value="Expressed in secondary oocyte and 173 other cell types or tissues"/>
</dbReference>
<dbReference type="GO" id="GO:0005737">
    <property type="term" value="C:cytoplasm"/>
    <property type="evidence" value="ECO:0000314"/>
    <property type="project" value="UniProtKB"/>
</dbReference>
<dbReference type="GO" id="GO:0016604">
    <property type="term" value="C:nuclear body"/>
    <property type="evidence" value="ECO:0000314"/>
    <property type="project" value="HPA"/>
</dbReference>
<dbReference type="GO" id="GO:0005654">
    <property type="term" value="C:nucleoplasm"/>
    <property type="evidence" value="ECO:0000314"/>
    <property type="project" value="HPA"/>
</dbReference>
<dbReference type="GO" id="GO:0005634">
    <property type="term" value="C:nucleus"/>
    <property type="evidence" value="ECO:0000314"/>
    <property type="project" value="UniProtKB"/>
</dbReference>
<dbReference type="GO" id="GO:0051721">
    <property type="term" value="F:protein phosphatase 2A binding"/>
    <property type="evidence" value="ECO:0000314"/>
    <property type="project" value="DisProt"/>
</dbReference>
<dbReference type="GO" id="GO:0004864">
    <property type="term" value="F:protein phosphatase inhibitor activity"/>
    <property type="evidence" value="ECO:0000314"/>
    <property type="project" value="DisProt"/>
</dbReference>
<dbReference type="GO" id="GO:0004865">
    <property type="term" value="F:protein serine/threonine phosphatase inhibitor activity"/>
    <property type="evidence" value="ECO:0000315"/>
    <property type="project" value="UniProtKB"/>
</dbReference>
<dbReference type="GO" id="GO:0044818">
    <property type="term" value="P:mitotic G2/M transition checkpoint"/>
    <property type="evidence" value="ECO:0000315"/>
    <property type="project" value="UniProtKB"/>
</dbReference>
<dbReference type="GO" id="GO:0030307">
    <property type="term" value="P:positive regulation of cell growth"/>
    <property type="evidence" value="ECO:0000315"/>
    <property type="project" value="UniProtKB"/>
</dbReference>
<dbReference type="GO" id="GO:0032436">
    <property type="term" value="P:positive regulation of proteasomal ubiquitin-dependent protein catabolic process"/>
    <property type="evidence" value="ECO:0000315"/>
    <property type="project" value="UniProtKB"/>
</dbReference>
<dbReference type="InterPro" id="IPR026716">
    <property type="entry name" value="PBIR1/2/3"/>
</dbReference>
<dbReference type="PANTHER" id="PTHR22227">
    <property type="entry name" value="FAMILY WITH SEQUENCE SIMILARITY 122B ISOFORM X1"/>
    <property type="match status" value="1"/>
</dbReference>
<dbReference type="PANTHER" id="PTHR22227:SF14">
    <property type="entry name" value="PPP2R1A-PPP2R2A-INTERACTING PHOSPHATASE REGULATOR 1"/>
    <property type="match status" value="1"/>
</dbReference>
<reference key="1">
    <citation type="journal article" date="2004" name="Nature">
        <title>DNA sequence and analysis of human chromosome 9.</title>
        <authorList>
            <person name="Humphray S.J."/>
            <person name="Oliver K."/>
            <person name="Hunt A.R."/>
            <person name="Plumb R.W."/>
            <person name="Loveland J.E."/>
            <person name="Howe K.L."/>
            <person name="Andrews T.D."/>
            <person name="Searle S."/>
            <person name="Hunt S.E."/>
            <person name="Scott C.E."/>
            <person name="Jones M.C."/>
            <person name="Ainscough R."/>
            <person name="Almeida J.P."/>
            <person name="Ambrose K.D."/>
            <person name="Ashwell R.I.S."/>
            <person name="Babbage A.K."/>
            <person name="Babbage S."/>
            <person name="Bagguley C.L."/>
            <person name="Bailey J."/>
            <person name="Banerjee R."/>
            <person name="Barker D.J."/>
            <person name="Barlow K.F."/>
            <person name="Bates K."/>
            <person name="Beasley H."/>
            <person name="Beasley O."/>
            <person name="Bird C.P."/>
            <person name="Bray-Allen S."/>
            <person name="Brown A.J."/>
            <person name="Brown J.Y."/>
            <person name="Burford D."/>
            <person name="Burrill W."/>
            <person name="Burton J."/>
            <person name="Carder C."/>
            <person name="Carter N.P."/>
            <person name="Chapman J.C."/>
            <person name="Chen Y."/>
            <person name="Clarke G."/>
            <person name="Clark S.Y."/>
            <person name="Clee C.M."/>
            <person name="Clegg S."/>
            <person name="Collier R.E."/>
            <person name="Corby N."/>
            <person name="Crosier M."/>
            <person name="Cummings A.T."/>
            <person name="Davies J."/>
            <person name="Dhami P."/>
            <person name="Dunn M."/>
            <person name="Dutta I."/>
            <person name="Dyer L.W."/>
            <person name="Earthrowl M.E."/>
            <person name="Faulkner L."/>
            <person name="Fleming C.J."/>
            <person name="Frankish A."/>
            <person name="Frankland J.A."/>
            <person name="French L."/>
            <person name="Fricker D.G."/>
            <person name="Garner P."/>
            <person name="Garnett J."/>
            <person name="Ghori J."/>
            <person name="Gilbert J.G.R."/>
            <person name="Glison C."/>
            <person name="Grafham D.V."/>
            <person name="Gribble S."/>
            <person name="Griffiths C."/>
            <person name="Griffiths-Jones S."/>
            <person name="Grocock R."/>
            <person name="Guy J."/>
            <person name="Hall R.E."/>
            <person name="Hammond S."/>
            <person name="Harley J.L."/>
            <person name="Harrison E.S.I."/>
            <person name="Hart E.A."/>
            <person name="Heath P.D."/>
            <person name="Henderson C.D."/>
            <person name="Hopkins B.L."/>
            <person name="Howard P.J."/>
            <person name="Howden P.J."/>
            <person name="Huckle E."/>
            <person name="Johnson C."/>
            <person name="Johnson D."/>
            <person name="Joy A.A."/>
            <person name="Kay M."/>
            <person name="Keenan S."/>
            <person name="Kershaw J.K."/>
            <person name="Kimberley A.M."/>
            <person name="King A."/>
            <person name="Knights A."/>
            <person name="Laird G.K."/>
            <person name="Langford C."/>
            <person name="Lawlor S."/>
            <person name="Leongamornlert D.A."/>
            <person name="Leversha M."/>
            <person name="Lloyd C."/>
            <person name="Lloyd D.M."/>
            <person name="Lovell J."/>
            <person name="Martin S."/>
            <person name="Mashreghi-Mohammadi M."/>
            <person name="Matthews L."/>
            <person name="McLaren S."/>
            <person name="McLay K.E."/>
            <person name="McMurray A."/>
            <person name="Milne S."/>
            <person name="Nickerson T."/>
            <person name="Nisbett J."/>
            <person name="Nordsiek G."/>
            <person name="Pearce A.V."/>
            <person name="Peck A.I."/>
            <person name="Porter K.M."/>
            <person name="Pandian R."/>
            <person name="Pelan S."/>
            <person name="Phillimore B."/>
            <person name="Povey S."/>
            <person name="Ramsey Y."/>
            <person name="Rand V."/>
            <person name="Scharfe M."/>
            <person name="Sehra H.K."/>
            <person name="Shownkeen R."/>
            <person name="Sims S.K."/>
            <person name="Skuce C.D."/>
            <person name="Smith M."/>
            <person name="Steward C.A."/>
            <person name="Swarbreck D."/>
            <person name="Sycamore N."/>
            <person name="Tester J."/>
            <person name="Thorpe A."/>
            <person name="Tracey A."/>
            <person name="Tromans A."/>
            <person name="Thomas D.W."/>
            <person name="Wall M."/>
            <person name="Wallis J.M."/>
            <person name="West A.P."/>
            <person name="Whitehead S.L."/>
            <person name="Willey D.L."/>
            <person name="Williams S.A."/>
            <person name="Wilming L."/>
            <person name="Wray P.W."/>
            <person name="Young L."/>
            <person name="Ashurst J.L."/>
            <person name="Coulson A."/>
            <person name="Blocker H."/>
            <person name="Durbin R.M."/>
            <person name="Sulston J.E."/>
            <person name="Hubbard T."/>
            <person name="Jackson M.J."/>
            <person name="Bentley D.R."/>
            <person name="Beck S."/>
            <person name="Rogers J."/>
            <person name="Dunham I."/>
        </authorList>
    </citation>
    <scope>NUCLEOTIDE SEQUENCE [LARGE SCALE GENOMIC DNA]</scope>
</reference>
<reference key="2">
    <citation type="journal article" date="2004" name="Genome Res.">
        <title>The status, quality, and expansion of the NIH full-length cDNA project: the Mammalian Gene Collection (MGC).</title>
        <authorList>
            <consortium name="The MGC Project Team"/>
        </authorList>
    </citation>
    <scope>NUCLEOTIDE SEQUENCE [LARGE SCALE MRNA]</scope>
    <source>
        <tissue>Cervix</tissue>
    </source>
</reference>
<reference key="3">
    <citation type="journal article" date="2006" name="Cell">
        <title>Global, in vivo, and site-specific phosphorylation dynamics in signaling networks.</title>
        <authorList>
            <person name="Olsen J.V."/>
            <person name="Blagoev B."/>
            <person name="Gnad F."/>
            <person name="Macek B."/>
            <person name="Kumar C."/>
            <person name="Mortensen P."/>
            <person name="Mann M."/>
        </authorList>
    </citation>
    <scope>PHOSPHORYLATION [LARGE SCALE ANALYSIS] AT SER-76 AND SER-143</scope>
    <scope>IDENTIFICATION BY MASS SPECTROMETRY [LARGE SCALE ANALYSIS]</scope>
    <source>
        <tissue>Cervix carcinoma</tissue>
    </source>
</reference>
<reference key="4">
    <citation type="journal article" date="2007" name="J. Proteome Res.">
        <title>Improved titanium dioxide enrichment of phosphopeptides from HeLa cells and high confident phosphopeptide identification by cross-validation of MS/MS and MS/MS/MS spectra.</title>
        <authorList>
            <person name="Yu L.R."/>
            <person name="Zhu Z."/>
            <person name="Chan K.C."/>
            <person name="Issaq H.J."/>
            <person name="Dimitrov D.S."/>
            <person name="Veenstra T.D."/>
        </authorList>
    </citation>
    <scope>PHOSPHORYLATION [LARGE SCALE ANALYSIS] AT SER-76</scope>
    <scope>IDENTIFICATION BY MASS SPECTROMETRY [LARGE SCALE ANALYSIS]</scope>
    <source>
        <tissue>Cervix carcinoma</tissue>
    </source>
</reference>
<reference key="5">
    <citation type="journal article" date="2008" name="J. Proteome Res.">
        <title>Combining protein-based IMAC, peptide-based IMAC, and MudPIT for efficient phosphoproteomic analysis.</title>
        <authorList>
            <person name="Cantin G.T."/>
            <person name="Yi W."/>
            <person name="Lu B."/>
            <person name="Park S.K."/>
            <person name="Xu T."/>
            <person name="Lee J.-D."/>
            <person name="Yates J.R. III"/>
        </authorList>
    </citation>
    <scope>PHOSPHORYLATION [LARGE SCALE ANALYSIS] AT SER-143</scope>
    <scope>IDENTIFICATION BY MASS SPECTROMETRY [LARGE SCALE ANALYSIS]</scope>
    <source>
        <tissue>Cervix carcinoma</tissue>
    </source>
</reference>
<reference key="6">
    <citation type="journal article" date="2008" name="Proc. Natl. Acad. Sci. U.S.A.">
        <title>A quantitative atlas of mitotic phosphorylation.</title>
        <authorList>
            <person name="Dephoure N."/>
            <person name="Zhou C."/>
            <person name="Villen J."/>
            <person name="Beausoleil S.A."/>
            <person name="Bakalarski C.E."/>
            <person name="Elledge S.J."/>
            <person name="Gygi S.P."/>
        </authorList>
    </citation>
    <scope>PHOSPHORYLATION [LARGE SCALE ANALYSIS] AT SER-45; SER-48; SER-143; SER-147; THR-149 AND SER-270</scope>
    <scope>IDENTIFICATION BY MASS SPECTROMETRY [LARGE SCALE ANALYSIS]</scope>
    <source>
        <tissue>Cervix carcinoma</tissue>
    </source>
</reference>
<reference key="7">
    <citation type="journal article" date="2009" name="Anal. Chem.">
        <title>Lys-N and trypsin cover complementary parts of the phosphoproteome in a refined SCX-based approach.</title>
        <authorList>
            <person name="Gauci S."/>
            <person name="Helbig A.O."/>
            <person name="Slijper M."/>
            <person name="Krijgsveld J."/>
            <person name="Heck A.J."/>
            <person name="Mohammed S."/>
        </authorList>
    </citation>
    <scope>IDENTIFICATION BY MASS SPECTROMETRY [LARGE SCALE ANALYSIS]</scope>
</reference>
<reference key="8">
    <citation type="journal article" date="2009" name="Sci. Signal.">
        <title>Quantitative phosphoproteomic analysis of T cell receptor signaling reveals system-wide modulation of protein-protein interactions.</title>
        <authorList>
            <person name="Mayya V."/>
            <person name="Lundgren D.H."/>
            <person name="Hwang S.-I."/>
            <person name="Rezaul K."/>
            <person name="Wu L."/>
            <person name="Eng J.K."/>
            <person name="Rodionov V."/>
            <person name="Han D.K."/>
        </authorList>
    </citation>
    <scope>PHOSPHORYLATION [LARGE SCALE ANALYSIS] AT SER-35; SER-37; THR-47; SER-48; SER-76; SER-143; SER-270 AND SER-276</scope>
    <scope>IDENTIFICATION BY MASS SPECTROMETRY [LARGE SCALE ANALYSIS]</scope>
    <source>
        <tissue>Leukemic T-cell</tissue>
    </source>
</reference>
<reference key="9">
    <citation type="journal article" date="2010" name="Sci. Signal.">
        <title>Quantitative phosphoproteomics reveals widespread full phosphorylation site occupancy during mitosis.</title>
        <authorList>
            <person name="Olsen J.V."/>
            <person name="Vermeulen M."/>
            <person name="Santamaria A."/>
            <person name="Kumar C."/>
            <person name="Miller M.L."/>
            <person name="Jensen L.J."/>
            <person name="Gnad F."/>
            <person name="Cox J."/>
            <person name="Jensen T.S."/>
            <person name="Nigg E.A."/>
            <person name="Brunak S."/>
            <person name="Mann M."/>
        </authorList>
    </citation>
    <scope>PHOSPHORYLATION [LARGE SCALE ANALYSIS] AT SER-62; SER-76; SER-143 AND SER-147</scope>
    <scope>IDENTIFICATION BY MASS SPECTROMETRY [LARGE SCALE ANALYSIS]</scope>
    <source>
        <tissue>Cervix carcinoma</tissue>
    </source>
</reference>
<reference key="10">
    <citation type="journal article" date="2011" name="Sci. Signal.">
        <title>System-wide temporal characterization of the proteome and phosphoproteome of human embryonic stem cell differentiation.</title>
        <authorList>
            <person name="Rigbolt K.T."/>
            <person name="Prokhorova T.A."/>
            <person name="Akimov V."/>
            <person name="Henningsen J."/>
            <person name="Johansen P.T."/>
            <person name="Kratchmarova I."/>
            <person name="Kassem M."/>
            <person name="Mann M."/>
            <person name="Olsen J.V."/>
            <person name="Blagoev B."/>
        </authorList>
    </citation>
    <scope>PHOSPHORYLATION [LARGE SCALE ANALYSIS] AT SER-76; SER-143 AND SER-147</scope>
    <scope>IDENTIFICATION BY MASS SPECTROMETRY [LARGE SCALE ANALYSIS]</scope>
</reference>
<reference key="11">
    <citation type="journal article" date="2013" name="J. Proteome Res.">
        <title>Toward a comprehensive characterization of a human cancer cell phosphoproteome.</title>
        <authorList>
            <person name="Zhou H."/>
            <person name="Di Palma S."/>
            <person name="Preisinger C."/>
            <person name="Peng M."/>
            <person name="Polat A.N."/>
            <person name="Heck A.J."/>
            <person name="Mohammed S."/>
        </authorList>
    </citation>
    <scope>PHOSPHORYLATION [LARGE SCALE ANALYSIS] AT SER-37; SER-48; SER-76; SER-143; SER-147; SER-187 AND SER-189</scope>
    <scope>IDENTIFICATION BY MASS SPECTROMETRY [LARGE SCALE ANALYSIS]</scope>
    <source>
        <tissue>Cervix carcinoma</tissue>
        <tissue>Erythroleukemia</tissue>
    </source>
</reference>
<reference key="12">
    <citation type="journal article" date="2014" name="J. Proteomics">
        <title>An enzyme assisted RP-RPLC approach for in-depth analysis of human liver phosphoproteome.</title>
        <authorList>
            <person name="Bian Y."/>
            <person name="Song C."/>
            <person name="Cheng K."/>
            <person name="Dong M."/>
            <person name="Wang F."/>
            <person name="Huang J."/>
            <person name="Sun D."/>
            <person name="Wang L."/>
            <person name="Ye M."/>
            <person name="Zou H."/>
        </authorList>
    </citation>
    <scope>PHOSPHORYLATION [LARGE SCALE ANALYSIS] AT SER-45 AND SER-76</scope>
    <scope>IDENTIFICATION BY MASS SPECTROMETRY [LARGE SCALE ANALYSIS]</scope>
    <source>
        <tissue>Liver</tissue>
    </source>
</reference>
<reference key="13">
    <citation type="journal article" date="2014" name="Proc. Natl. Acad. Sci. U.S.A.">
        <title>Mapping of SUMO sites and analysis of SUMOylation changes induced by external stimuli.</title>
        <authorList>
            <person name="Impens F."/>
            <person name="Radoshevich L."/>
            <person name="Cossart P."/>
            <person name="Ribet D."/>
        </authorList>
    </citation>
    <scope>SUMOYLATION [LARGE SCALE ANALYSIS] AT LYS-89</scope>
    <scope>IDENTIFICATION BY MASS SPECTROMETRY [LARGE SCALE ANALYSIS]</scope>
</reference>
<reference key="14">
    <citation type="journal article" date="2016" name="Oncotarget">
        <title>FAM122A, a new endogenous inhibitor of protein phosphatase 2A.</title>
        <authorList>
            <person name="Fan L."/>
            <person name="Liu M.H."/>
            <person name="Guo M."/>
            <person name="Hu C.X."/>
            <person name="Yan Z.W."/>
            <person name="Chen J."/>
            <person name="Chen G.Q."/>
            <person name="Huang Y."/>
        </authorList>
    </citation>
    <scope>FUNCTION</scope>
    <scope>INTERACTION WITH PPP2CA; PPP2R2A AND PPP2R1A</scope>
</reference>
<reference key="15">
    <citation type="journal article" date="2020" name="Mol. Cell">
        <title>CHK1 Inhibitor Blocks Phosphorylation of FAM122A and Promotes Replication Stress.</title>
        <authorList>
            <person name="Li F."/>
            <person name="Kozono D."/>
            <person name="Deraska P."/>
            <person name="Branigan T."/>
            <person name="Dunn C."/>
            <person name="Zheng X.F."/>
            <person name="Parmar K."/>
            <person name="Nguyen H."/>
            <person name="DeCaprio J."/>
            <person name="Shapiro G.I."/>
            <person name="Chowdhury D."/>
            <person name="D'Andrea A.D."/>
        </authorList>
    </citation>
    <scope>FUNCTION</scope>
    <scope>SUBCELLULAR LOCATION</scope>
    <scope>PHOSPHORYLATION AT SER-37</scope>
    <scope>MUTAGENESIS OF SER-37</scope>
    <scope>INTERACTION WITH PPP2R2A AND 14-3-3 PROTEINS</scope>
</reference>
<reference evidence="10 11 12" key="16">
    <citation type="journal article" date="2024" name="Nature">
        <title>Cryo-EM structures of PP2A:B55-FAM122A and PP2A:B55-ARPP19.</title>
        <authorList>
            <person name="Padi S.K.R."/>
            <person name="Vos M.R."/>
            <person name="Godek R.J."/>
            <person name="Fuller J.R."/>
            <person name="Kruse T."/>
            <person name="Hein J.B."/>
            <person name="Nilsson J."/>
            <person name="Kelker M.S."/>
            <person name="Page R."/>
            <person name="Peti W."/>
        </authorList>
    </citation>
    <scope>STRUCTURE BY ELECTRON MICROSCOPY (2.55 ANGSTROMS) OF 29-120 IN COMPLEX WITH PPP2CA; PPP2R1A AND PPP2R2A</scope>
    <scope>FUNCTION</scope>
    <scope>INTERACTION WITH PPP2R2A</scope>
    <scope>MUTAGENESIS OF 84-ARG-LEU-85; 88-ILE-LYS-89; GLU-91; GLU-92; ARG-105 AND VAL-107</scope>
</reference>
<proteinExistence type="evidence at protein level"/>
<sequence length="287" mass="30529">MAQEKMELDLELPPGTGGSPAEGGGSGGGGGLRRSNSAPLIHGLSDTSPVFQAEAPSARRNSTTFPSRHGLLLPASPVRMHSSRLHQIKQEEGMDLINRETVHEREVQTAMQISHSWEESFSLSDNDVEKSASPKRIDFIPVSPAPSPTRGIGKQCFSPSLQSFVSSNGLPPSPIPSPTTRFTTRRSQSPINCIRPSVLGPLKRKCEMETEYQPKRFFQGITNMLSSDVAQLSDPGVCVSSDTLDGNSSSAGSSCNSPAKVSTTTDSPVSPAQAASPFIPLDELSSK</sequence>
<organism>
    <name type="scientific">Homo sapiens</name>
    <name type="common">Human</name>
    <dbReference type="NCBI Taxonomy" id="9606"/>
    <lineage>
        <taxon>Eukaryota</taxon>
        <taxon>Metazoa</taxon>
        <taxon>Chordata</taxon>
        <taxon>Craniata</taxon>
        <taxon>Vertebrata</taxon>
        <taxon>Euteleostomi</taxon>
        <taxon>Mammalia</taxon>
        <taxon>Eutheria</taxon>
        <taxon>Euarchontoglires</taxon>
        <taxon>Primates</taxon>
        <taxon>Haplorrhini</taxon>
        <taxon>Catarrhini</taxon>
        <taxon>Hominidae</taxon>
        <taxon>Homo</taxon>
    </lineage>
</organism>
<evidence type="ECO:0000250" key="1">
    <source>
        <dbReference type="UniProtKB" id="Q9DB52"/>
    </source>
</evidence>
<evidence type="ECO:0000256" key="2">
    <source>
        <dbReference type="SAM" id="MobiDB-lite"/>
    </source>
</evidence>
<evidence type="ECO:0000269" key="3">
    <source>
    </source>
</evidence>
<evidence type="ECO:0000269" key="4">
    <source>
    </source>
</evidence>
<evidence type="ECO:0000269" key="5">
    <source>
    </source>
</evidence>
<evidence type="ECO:0000303" key="6">
    <source>
    </source>
</evidence>
<evidence type="ECO:0000303" key="7">
    <source>
    </source>
</evidence>
<evidence type="ECO:0000305" key="8"/>
<evidence type="ECO:0000312" key="9">
    <source>
        <dbReference type="HGNC" id="HGNC:23490"/>
    </source>
</evidence>
<evidence type="ECO:0007744" key="10">
    <source>
        <dbReference type="PDB" id="8SO0"/>
    </source>
</evidence>
<evidence type="ECO:0007744" key="11">
    <source>
        <dbReference type="PDB" id="8TWE"/>
    </source>
</evidence>
<evidence type="ECO:0007744" key="12">
    <source>
        <dbReference type="PDB" id="8TWI"/>
    </source>
</evidence>
<evidence type="ECO:0007744" key="13">
    <source>
    </source>
</evidence>
<evidence type="ECO:0007744" key="14">
    <source>
    </source>
</evidence>
<evidence type="ECO:0007744" key="15">
    <source>
    </source>
</evidence>
<evidence type="ECO:0007744" key="16">
    <source>
    </source>
</evidence>
<evidence type="ECO:0007744" key="17">
    <source>
    </source>
</evidence>
<evidence type="ECO:0007744" key="18">
    <source>
    </source>
</evidence>
<evidence type="ECO:0007744" key="19">
    <source>
    </source>
</evidence>
<evidence type="ECO:0007744" key="20">
    <source>
    </source>
</evidence>
<evidence type="ECO:0007744" key="21">
    <source>
    </source>
</evidence>
<evidence type="ECO:0007744" key="22">
    <source>
    </source>
</evidence>
<evidence type="ECO:0007829" key="23">
    <source>
        <dbReference type="PDB" id="8TWE"/>
    </source>
</evidence>
<evidence type="ECO:0007829" key="24">
    <source>
        <dbReference type="PDB" id="8TWI"/>
    </source>
</evidence>
<accession>Q96E09</accession>
<keyword id="KW-0002">3D-structure</keyword>
<keyword id="KW-0963">Cytoplasm</keyword>
<keyword id="KW-1017">Isopeptide bond</keyword>
<keyword id="KW-0539">Nucleus</keyword>
<keyword id="KW-0597">Phosphoprotein</keyword>
<keyword id="KW-0650">Protein phosphatase inhibitor</keyword>
<keyword id="KW-1267">Proteomics identification</keyword>
<keyword id="KW-1185">Reference proteome</keyword>
<keyword id="KW-0832">Ubl conjugation</keyword>
<name>PBIR1_HUMAN</name>
<feature type="chain" id="PRO_0000089689" description="PPP2R1A-PPP2R2A-interacting phosphatase regulator 1">
    <location>
        <begin position="1"/>
        <end position="287"/>
    </location>
</feature>
<feature type="region of interest" description="Disordered" evidence="2">
    <location>
        <begin position="1"/>
        <end position="44"/>
    </location>
</feature>
<feature type="region of interest" description="Disordered" evidence="2">
    <location>
        <begin position="167"/>
        <end position="189"/>
    </location>
</feature>
<feature type="region of interest" description="Disordered" evidence="2">
    <location>
        <begin position="236"/>
        <end position="287"/>
    </location>
</feature>
<feature type="compositionally biased region" description="Gly residues" evidence="2">
    <location>
        <begin position="15"/>
        <end position="32"/>
    </location>
</feature>
<feature type="compositionally biased region" description="Low complexity" evidence="2">
    <location>
        <begin position="178"/>
        <end position="189"/>
    </location>
</feature>
<feature type="compositionally biased region" description="Low complexity" evidence="2">
    <location>
        <begin position="246"/>
        <end position="257"/>
    </location>
</feature>
<feature type="compositionally biased region" description="Polar residues" evidence="2">
    <location>
        <begin position="259"/>
        <end position="270"/>
    </location>
</feature>
<feature type="modified residue" description="Phosphoserine" evidence="17">
    <location>
        <position position="35"/>
    </location>
</feature>
<feature type="modified residue" description="Phosphoserine; by CHEK1" evidence="4 17 20">
    <location>
        <position position="37"/>
    </location>
</feature>
<feature type="modified residue" description="Phosphoserine" evidence="16 21">
    <location>
        <position position="45"/>
    </location>
</feature>
<feature type="modified residue" description="Phosphothreonine" evidence="17">
    <location>
        <position position="47"/>
    </location>
</feature>
<feature type="modified residue" description="Phosphoserine" evidence="16 17 20">
    <location>
        <position position="48"/>
    </location>
</feature>
<feature type="modified residue" description="Phosphoserine" evidence="18">
    <location>
        <position position="62"/>
    </location>
</feature>
<feature type="modified residue" description="Phosphoserine" evidence="13 14 17 18 19 20 21">
    <location>
        <position position="76"/>
    </location>
</feature>
<feature type="modified residue" description="Phosphoserine" evidence="13 15 16 17 18 19 20">
    <location>
        <position position="143"/>
    </location>
</feature>
<feature type="modified residue" description="Phosphoserine" evidence="16 18 19 20">
    <location>
        <position position="147"/>
    </location>
</feature>
<feature type="modified residue" description="Phosphothreonine" evidence="16">
    <location>
        <position position="149"/>
    </location>
</feature>
<feature type="modified residue" description="Phosphoserine" evidence="20">
    <location>
        <position position="187"/>
    </location>
</feature>
<feature type="modified residue" description="Phosphoserine" evidence="20">
    <location>
        <position position="189"/>
    </location>
</feature>
<feature type="modified residue" description="Phosphoserine" evidence="1">
    <location>
        <position position="267"/>
    </location>
</feature>
<feature type="modified residue" description="Phosphoserine" evidence="16 17">
    <location>
        <position position="270"/>
    </location>
</feature>
<feature type="modified residue" description="Phosphoserine" evidence="17">
    <location>
        <position position="276"/>
    </location>
</feature>
<feature type="cross-link" description="Glycyl lysine isopeptide (Lys-Gly) (interchain with G-Cter in SUMO1)" evidence="22">
    <location>
        <position position="89"/>
    </location>
</feature>
<feature type="mutagenesis site" description="Loss of phosphorylation and interaction with 14-3-3 proteins. Enhanced interaction with PPP2R2A." evidence="4">
    <original>S</original>
    <variation>A</variation>
    <location>
        <position position="37"/>
    </location>
</feature>
<feature type="mutagenesis site" description="Impairs interaction with PPP2R2A and reduces the inhibition of PP2A activity by PABIR1/FAM122A." evidence="5">
    <original>RL</original>
    <variation>AA</variation>
    <location>
        <begin position="84"/>
        <end position="85"/>
    </location>
</feature>
<feature type="mutagenesis site" description="Impairs interaction with PPP2R2A and reduces the inhibition of PP2A activity by PABIR1/FAM122A." evidence="5">
    <original>IK</original>
    <variation>AA</variation>
    <location>
        <begin position="88"/>
        <end position="89"/>
    </location>
</feature>
<feature type="mutagenesis site" description="Impairs interaction with PPP2R2A and reduces the inhibition of PP2A activity by PABIR1/FAM122A." evidence="5">
    <original>E</original>
    <variation>K</variation>
    <location>
        <position position="91"/>
    </location>
</feature>
<feature type="mutagenesis site" description="Impairs interaction with PPP2R2A and reduces the inhibition of PP2A activity by PABIR1/FAM122A." evidence="5">
    <original>E</original>
    <variation>K</variation>
    <location>
        <position position="92"/>
    </location>
</feature>
<feature type="mutagenesis site" description="Reduces the inhibition of PP2A activity by PABIR1/FAM122A." evidence="5">
    <original>R</original>
    <variation>L</variation>
    <location>
        <position position="105"/>
    </location>
</feature>
<feature type="mutagenesis site" description="Reduces the inhibition of PP2A activity by PABIR1/FAM122A." evidence="5">
    <original>V</original>
    <variation>G</variation>
    <location>
        <position position="107"/>
    </location>
</feature>
<feature type="helix" evidence="23">
    <location>
        <begin position="84"/>
        <end position="91"/>
    </location>
</feature>
<feature type="helix" evidence="24">
    <location>
        <begin position="96"/>
        <end position="110"/>
    </location>
</feature>
<protein>
    <recommendedName>
        <fullName evidence="6 9">PPP2R1A-PPP2R2A-interacting phosphatase regulator 1</fullName>
    </recommendedName>
    <alternativeName>
        <fullName evidence="8">PABIR family member 1</fullName>
    </alternativeName>
</protein>
<comment type="function">
    <text evidence="3 4 5">Acts as an inhibitor of serine/threonine-protein phosphatase 2A (PP2A) activity (PubMed:27588481, PubMed:33108758, PubMed:38123684). Inhibits PP2A activity by blocking the substrate binding site on PPP2R2A and the active site of PPP2CA (PubMed:38123684). Potentiates ubiquitin-mediated proteasomal degradation of serine/threonine-protein phosphatase 2A catalytic subunit alpha (PPP2CA) (PubMed:27588481). Inhibits PP2A-mediated dephosphorylation of WEE1, promoting ubiquitin-mediated proteolysis of WEE1, thereby releasing G2/M checkpoint (PubMed:33108758).</text>
</comment>
<comment type="subunit">
    <text evidence="3 4 5">Interacts with PPP2CA and PPP2R1A (PubMed:27588481). Interacts (via its N-terminus) with PPP2R2A; the interaction is direct and this interaction inhibits PP2A activity (PubMed:27588481, PubMed:33108758, PubMed:38123684). The CHEK1-mediated Ser-37 phosphorylated form interacts with 14-3-3 proteins (PubMed:33108758).</text>
</comment>
<comment type="interaction">
    <interactant intactId="EBI-9355758">
        <id>Q96E09</id>
    </interactant>
    <interactant intactId="EBI-750109">
        <id>Q9NYB0</id>
        <label>TERF2IP</label>
    </interactant>
    <organismsDiffer>false</organismsDiffer>
    <experiments>2</experiments>
</comment>
<comment type="subcellular location">
    <subcellularLocation>
        <location evidence="4">Nucleus</location>
    </subcellularLocation>
    <subcellularLocation>
        <location evidence="4">Cytoplasm</location>
    </subcellularLocation>
    <text evidence="4">The CHEK1-mediated Ser-37 phosphorylated form is sequestered by 14-3-3 proteins in the cytoplasm and fails to translocate to the nucleus, where it otherwise inhibits serine/threonine-protein phosphatase 2A.</text>
</comment>
<comment type="PTM">
    <text evidence="4">CHEK1-mediated phosphorylation at Ser-37 negatively regulates its ability to inhibit serine/threonine-protein phosphatase 2A (PP2A) activity. Phosphorylation leads to its release from the PP2A complex and its sequestration by 14-3-3 proteins in the cytoplasm resulting in its inability to translocate to the nucleus, where it otherwise inhibits PP2A.</text>
</comment>
<comment type="similarity">
    <text evidence="8">Belongs to the FAM122 family.</text>
</comment>
<gene>
    <name evidence="6 9" type="primary">PABIR1</name>
    <name type="synonym">C9orf42</name>
    <name evidence="6 7" type="synonym">FAM122A</name>
</gene>